<name>SSTT_ACIAD</name>
<keyword id="KW-0029">Amino-acid transport</keyword>
<keyword id="KW-0997">Cell inner membrane</keyword>
<keyword id="KW-1003">Cell membrane</keyword>
<keyword id="KW-0472">Membrane</keyword>
<keyword id="KW-0769">Symport</keyword>
<keyword id="KW-0812">Transmembrane</keyword>
<keyword id="KW-1133">Transmembrane helix</keyword>
<keyword id="KW-0813">Transport</keyword>
<comment type="function">
    <text evidence="1">Involved in the import of serine and threonine into the cell, with the concomitant import of sodium (symport system).</text>
</comment>
<comment type="catalytic activity">
    <reaction evidence="1">
        <text>L-serine(in) + Na(+)(in) = L-serine(out) + Na(+)(out)</text>
        <dbReference type="Rhea" id="RHEA:29575"/>
        <dbReference type="ChEBI" id="CHEBI:29101"/>
        <dbReference type="ChEBI" id="CHEBI:33384"/>
    </reaction>
    <physiologicalReaction direction="right-to-left" evidence="1">
        <dbReference type="Rhea" id="RHEA:29577"/>
    </physiologicalReaction>
</comment>
<comment type="catalytic activity">
    <reaction evidence="1">
        <text>L-threonine(in) + Na(+)(in) = L-threonine(out) + Na(+)(out)</text>
        <dbReference type="Rhea" id="RHEA:69999"/>
        <dbReference type="ChEBI" id="CHEBI:29101"/>
        <dbReference type="ChEBI" id="CHEBI:57926"/>
    </reaction>
    <physiologicalReaction direction="right-to-left" evidence="1">
        <dbReference type="Rhea" id="RHEA:70001"/>
    </physiologicalReaction>
</comment>
<comment type="subcellular location">
    <subcellularLocation>
        <location evidence="1">Cell inner membrane</location>
        <topology evidence="1">Multi-pass membrane protein</topology>
    </subcellularLocation>
</comment>
<comment type="similarity">
    <text evidence="1">Belongs to the dicarboxylate/amino acid:cation symporter (DAACS) (TC 2.A.23) family.</text>
</comment>
<feature type="chain" id="PRO_0000309071" description="Serine/threonine transporter SstT">
    <location>
        <begin position="1"/>
        <end position="399"/>
    </location>
</feature>
<feature type="transmembrane region" description="Helical" evidence="1">
    <location>
        <begin position="8"/>
        <end position="28"/>
    </location>
</feature>
<feature type="transmembrane region" description="Helical" evidence="1">
    <location>
        <begin position="37"/>
        <end position="57"/>
    </location>
</feature>
<feature type="transmembrane region" description="Helical" evidence="1">
    <location>
        <begin position="77"/>
        <end position="97"/>
    </location>
</feature>
<feature type="transmembrane region" description="Helical" evidence="1">
    <location>
        <begin position="134"/>
        <end position="154"/>
    </location>
</feature>
<feature type="transmembrane region" description="Helical" evidence="1">
    <location>
        <begin position="178"/>
        <end position="198"/>
    </location>
</feature>
<feature type="transmembrane region" description="Helical" evidence="1">
    <location>
        <begin position="212"/>
        <end position="232"/>
    </location>
</feature>
<feature type="transmembrane region" description="Helical" evidence="1">
    <location>
        <begin position="284"/>
        <end position="304"/>
    </location>
</feature>
<feature type="transmembrane region" description="Helical" evidence="1">
    <location>
        <begin position="312"/>
        <end position="332"/>
    </location>
</feature>
<feature type="transmembrane region" description="Helical" evidence="1">
    <location>
        <begin position="348"/>
        <end position="370"/>
    </location>
</feature>
<dbReference type="EMBL" id="CR543861">
    <property type="protein sequence ID" value="CAG68698.1"/>
    <property type="molecule type" value="Genomic_DNA"/>
</dbReference>
<dbReference type="RefSeq" id="WP_004927028.1">
    <property type="nucleotide sequence ID" value="NC_005966.1"/>
</dbReference>
<dbReference type="SMR" id="Q6FB65"/>
<dbReference type="STRING" id="202950.GCA_001485005_00493"/>
<dbReference type="GeneID" id="45234239"/>
<dbReference type="KEGG" id="aci:ACIAD1866"/>
<dbReference type="eggNOG" id="COG3633">
    <property type="taxonomic scope" value="Bacteria"/>
</dbReference>
<dbReference type="HOGENOM" id="CLU_044581_0_0_6"/>
<dbReference type="OrthoDB" id="9768885at2"/>
<dbReference type="BioCyc" id="ASP62977:ACIAD_RS08600-MONOMER"/>
<dbReference type="Proteomes" id="UP000000430">
    <property type="component" value="Chromosome"/>
</dbReference>
<dbReference type="GO" id="GO:0005886">
    <property type="term" value="C:plasma membrane"/>
    <property type="evidence" value="ECO:0007669"/>
    <property type="project" value="UniProtKB-SubCell"/>
</dbReference>
<dbReference type="GO" id="GO:0015171">
    <property type="term" value="F:amino acid transmembrane transporter activity"/>
    <property type="evidence" value="ECO:0007669"/>
    <property type="project" value="UniProtKB-UniRule"/>
</dbReference>
<dbReference type="GO" id="GO:0015293">
    <property type="term" value="F:symporter activity"/>
    <property type="evidence" value="ECO:0007669"/>
    <property type="project" value="UniProtKB-UniRule"/>
</dbReference>
<dbReference type="GO" id="GO:0032329">
    <property type="term" value="P:serine transport"/>
    <property type="evidence" value="ECO:0007669"/>
    <property type="project" value="InterPro"/>
</dbReference>
<dbReference type="GO" id="GO:0015826">
    <property type="term" value="P:threonine transport"/>
    <property type="evidence" value="ECO:0007669"/>
    <property type="project" value="InterPro"/>
</dbReference>
<dbReference type="FunFam" id="1.10.3860.10:FF:000003">
    <property type="entry name" value="Serine/threonine transporter sstT"/>
    <property type="match status" value="1"/>
</dbReference>
<dbReference type="Gene3D" id="1.10.3860.10">
    <property type="entry name" value="Sodium:dicarboxylate symporter"/>
    <property type="match status" value="1"/>
</dbReference>
<dbReference type="HAMAP" id="MF_01582">
    <property type="entry name" value="Ser_Thr_transp_SstT"/>
    <property type="match status" value="1"/>
</dbReference>
<dbReference type="InterPro" id="IPR001991">
    <property type="entry name" value="Na-dicarboxylate_symporter"/>
</dbReference>
<dbReference type="InterPro" id="IPR036458">
    <property type="entry name" value="Na:dicarbo_symporter_sf"/>
</dbReference>
<dbReference type="InterPro" id="IPR023025">
    <property type="entry name" value="Ser_Thr_transp_SstT"/>
</dbReference>
<dbReference type="NCBIfam" id="NF010151">
    <property type="entry name" value="PRK13628.1"/>
    <property type="match status" value="1"/>
</dbReference>
<dbReference type="PANTHER" id="PTHR42865">
    <property type="entry name" value="PROTON/GLUTAMATE-ASPARTATE SYMPORTER"/>
    <property type="match status" value="1"/>
</dbReference>
<dbReference type="PANTHER" id="PTHR42865:SF7">
    <property type="entry name" value="PROTON_GLUTAMATE-ASPARTATE SYMPORTER"/>
    <property type="match status" value="1"/>
</dbReference>
<dbReference type="Pfam" id="PF00375">
    <property type="entry name" value="SDF"/>
    <property type="match status" value="1"/>
</dbReference>
<dbReference type="PRINTS" id="PR00173">
    <property type="entry name" value="EDTRNSPORT"/>
</dbReference>
<dbReference type="SUPFAM" id="SSF118215">
    <property type="entry name" value="Proton glutamate symport protein"/>
    <property type="match status" value="1"/>
</dbReference>
<organism>
    <name type="scientific">Acinetobacter baylyi (strain ATCC 33305 / BD413 / ADP1)</name>
    <dbReference type="NCBI Taxonomy" id="62977"/>
    <lineage>
        <taxon>Bacteria</taxon>
        <taxon>Pseudomonadati</taxon>
        <taxon>Pseudomonadota</taxon>
        <taxon>Gammaproteobacteria</taxon>
        <taxon>Moraxellales</taxon>
        <taxon>Moraxellaceae</taxon>
        <taxon>Acinetobacter</taxon>
    </lineage>
</organism>
<accession>Q6FB65</accession>
<reference key="1">
    <citation type="journal article" date="2004" name="Nucleic Acids Res.">
        <title>Unique features revealed by the genome sequence of Acinetobacter sp. ADP1, a versatile and naturally transformation competent bacterium.</title>
        <authorList>
            <person name="Barbe V."/>
            <person name="Vallenet D."/>
            <person name="Fonknechten N."/>
            <person name="Kreimeyer A."/>
            <person name="Oztas S."/>
            <person name="Labarre L."/>
            <person name="Cruveiller S."/>
            <person name="Robert C."/>
            <person name="Duprat S."/>
            <person name="Wincker P."/>
            <person name="Ornston L.N."/>
            <person name="Weissenbach J."/>
            <person name="Marliere P."/>
            <person name="Cohen G.N."/>
            <person name="Medigue C."/>
        </authorList>
    </citation>
    <scope>NUCLEOTIDE SEQUENCE [LARGE SCALE GENOMIC DNA]</scope>
    <source>
        <strain>ATCC 33305 / BD413 / ADP1</strain>
    </source>
</reference>
<proteinExistence type="inferred from homology"/>
<protein>
    <recommendedName>
        <fullName evidence="1">Serine/threonine transporter SstT</fullName>
    </recommendedName>
    <alternativeName>
        <fullName evidence="1">Na(+)/serine-threonine symporter</fullName>
    </alternativeName>
</protein>
<gene>
    <name evidence="1" type="primary">sstT</name>
    <name type="ordered locus">ACIAD1866</name>
</gene>
<sequence length="399" mass="42240">MFSILLRLSLVTKIFIAIILGFVVAFLFPNMTPYFSIFGEIFIKALKAVAPILVFVLVISSIANFNVEQSAKNFKPILFLYIVSMLFAAFSAVIADLLFPTTLVLASSADQAFQPPGSLNDVLKNLILSFVSNPVVALSEANFIGILAWAIILGTAFRHSTQATKTVLQDCADAIGKVIHLVISFAPIGIFGLVAVTFAHSGIETLKSYSHLLLVLLGTMFFMALIVNPIMVACVIKKNPYPLVFKCLRESGITAFFTRSSAANIPVNLDLARRCGVDESTSNVIIPLGSTVNMCGAAITITVLTLATVNTLGISVDIWTMLILCVVASISACGASGVAGGSLLLVPVACSLFGISSDIAMQVVAIGMVISVLQDSTETALNSSTDVLFVIAVDQASKT</sequence>
<evidence type="ECO:0000255" key="1">
    <source>
        <dbReference type="HAMAP-Rule" id="MF_01582"/>
    </source>
</evidence>